<feature type="chain" id="PRO_0000142206" description="Imidazole glycerol phosphate synthase subunit hisF1">
    <location>
        <begin position="1"/>
        <end position="256"/>
    </location>
</feature>
<feature type="active site" evidence="2">
    <location>
        <position position="12"/>
    </location>
</feature>
<feature type="active site" evidence="2">
    <location>
        <position position="131"/>
    </location>
</feature>
<gene>
    <name type="primary">hisF1</name>
    <name type="ordered locus">PA5140</name>
</gene>
<organism>
    <name type="scientific">Pseudomonas aeruginosa (strain ATCC 15692 / DSM 22644 / CIP 104116 / JCM 14847 / LMG 12228 / 1C / PRS 101 / PAO1)</name>
    <dbReference type="NCBI Taxonomy" id="208964"/>
    <lineage>
        <taxon>Bacteria</taxon>
        <taxon>Pseudomonadati</taxon>
        <taxon>Pseudomonadota</taxon>
        <taxon>Gammaproteobacteria</taxon>
        <taxon>Pseudomonadales</taxon>
        <taxon>Pseudomonadaceae</taxon>
        <taxon>Pseudomonas</taxon>
    </lineage>
</organism>
<proteinExistence type="inferred from homology"/>
<protein>
    <recommendedName>
        <fullName>Imidazole glycerol phosphate synthase subunit hisF1</fullName>
        <ecNumber>4.3.2.10</ecNumber>
    </recommendedName>
    <alternativeName>
        <fullName>IGP synthase cyclase subunit</fullName>
    </alternativeName>
    <alternativeName>
        <fullName>IGP synthase subunit hisF1</fullName>
    </alternativeName>
    <alternativeName>
        <fullName>ImGP synthase subunit hisF1</fullName>
        <shortName>IGPS subunit hisF1</shortName>
    </alternativeName>
</protein>
<name>HIS61_PSEAE</name>
<evidence type="ECO:0000250" key="1"/>
<evidence type="ECO:0000255" key="2"/>
<evidence type="ECO:0000305" key="3"/>
<keyword id="KW-0028">Amino-acid biosynthesis</keyword>
<keyword id="KW-0963">Cytoplasm</keyword>
<keyword id="KW-0368">Histidine biosynthesis</keyword>
<keyword id="KW-0456">Lyase</keyword>
<keyword id="KW-1185">Reference proteome</keyword>
<dbReference type="EC" id="4.3.2.10"/>
<dbReference type="EMBL" id="AE004091">
    <property type="protein sequence ID" value="AAG08525.1"/>
    <property type="molecule type" value="Genomic_DNA"/>
</dbReference>
<dbReference type="PIR" id="H83002">
    <property type="entry name" value="H83002"/>
</dbReference>
<dbReference type="RefSeq" id="NP_253827.1">
    <property type="nucleotide sequence ID" value="NC_002516.2"/>
</dbReference>
<dbReference type="SMR" id="Q9HU44"/>
<dbReference type="FunCoup" id="Q9HU44">
    <property type="interactions" value="721"/>
</dbReference>
<dbReference type="STRING" id="208964.PA5140"/>
<dbReference type="PaxDb" id="208964-PA5140"/>
<dbReference type="GeneID" id="878541"/>
<dbReference type="KEGG" id="pae:PA5140"/>
<dbReference type="PATRIC" id="fig|208964.12.peg.5386"/>
<dbReference type="PseudoCAP" id="PA5140"/>
<dbReference type="HOGENOM" id="CLU_048577_4_0_6"/>
<dbReference type="InParanoid" id="Q9HU44"/>
<dbReference type="OrthoDB" id="9781903at2"/>
<dbReference type="PhylomeDB" id="Q9HU44"/>
<dbReference type="BioCyc" id="PAER208964:G1FZ6-5255-MONOMER"/>
<dbReference type="UniPathway" id="UPA00031">
    <property type="reaction ID" value="UER00010"/>
</dbReference>
<dbReference type="Proteomes" id="UP000002438">
    <property type="component" value="Chromosome"/>
</dbReference>
<dbReference type="GO" id="GO:0005737">
    <property type="term" value="C:cytoplasm"/>
    <property type="evidence" value="ECO:0007669"/>
    <property type="project" value="UniProtKB-SubCell"/>
</dbReference>
<dbReference type="GO" id="GO:0000107">
    <property type="term" value="F:imidazoleglycerol-phosphate synthase activity"/>
    <property type="evidence" value="ECO:0000318"/>
    <property type="project" value="GO_Central"/>
</dbReference>
<dbReference type="GO" id="GO:0016829">
    <property type="term" value="F:lyase activity"/>
    <property type="evidence" value="ECO:0007669"/>
    <property type="project" value="UniProtKB-KW"/>
</dbReference>
<dbReference type="GO" id="GO:0000105">
    <property type="term" value="P:L-histidine biosynthetic process"/>
    <property type="evidence" value="ECO:0007669"/>
    <property type="project" value="UniProtKB-UniRule"/>
</dbReference>
<dbReference type="CDD" id="cd04731">
    <property type="entry name" value="HisF"/>
    <property type="match status" value="1"/>
</dbReference>
<dbReference type="FunFam" id="3.20.20.70:FF:000006">
    <property type="entry name" value="Imidazole glycerol phosphate synthase subunit HisF"/>
    <property type="match status" value="1"/>
</dbReference>
<dbReference type="Gene3D" id="3.20.20.70">
    <property type="entry name" value="Aldolase class I"/>
    <property type="match status" value="1"/>
</dbReference>
<dbReference type="HAMAP" id="MF_01013">
    <property type="entry name" value="HisF"/>
    <property type="match status" value="1"/>
</dbReference>
<dbReference type="InterPro" id="IPR013785">
    <property type="entry name" value="Aldolase_TIM"/>
</dbReference>
<dbReference type="InterPro" id="IPR006062">
    <property type="entry name" value="His_biosynth"/>
</dbReference>
<dbReference type="InterPro" id="IPR004651">
    <property type="entry name" value="HisF"/>
</dbReference>
<dbReference type="InterPro" id="IPR050064">
    <property type="entry name" value="IGPS_HisA/HisF"/>
</dbReference>
<dbReference type="InterPro" id="IPR011060">
    <property type="entry name" value="RibuloseP-bd_barrel"/>
</dbReference>
<dbReference type="NCBIfam" id="TIGR00735">
    <property type="entry name" value="hisF"/>
    <property type="match status" value="1"/>
</dbReference>
<dbReference type="PANTHER" id="PTHR21235:SF2">
    <property type="entry name" value="IMIDAZOLE GLYCEROL PHOSPHATE SYNTHASE HISHF"/>
    <property type="match status" value="1"/>
</dbReference>
<dbReference type="PANTHER" id="PTHR21235">
    <property type="entry name" value="IMIDAZOLE GLYCEROL PHOSPHATE SYNTHASE SUBUNIT HISF/H IGP SYNTHASE SUBUNIT HISF/H"/>
    <property type="match status" value="1"/>
</dbReference>
<dbReference type="Pfam" id="PF00977">
    <property type="entry name" value="His_biosynth"/>
    <property type="match status" value="1"/>
</dbReference>
<dbReference type="SUPFAM" id="SSF51366">
    <property type="entry name" value="Ribulose-phoshate binding barrel"/>
    <property type="match status" value="1"/>
</dbReference>
<reference key="1">
    <citation type="journal article" date="2000" name="Nature">
        <title>Complete genome sequence of Pseudomonas aeruginosa PAO1, an opportunistic pathogen.</title>
        <authorList>
            <person name="Stover C.K."/>
            <person name="Pham X.-Q.T."/>
            <person name="Erwin A.L."/>
            <person name="Mizoguchi S.D."/>
            <person name="Warrener P."/>
            <person name="Hickey M.J."/>
            <person name="Brinkman F.S.L."/>
            <person name="Hufnagle W.O."/>
            <person name="Kowalik D.J."/>
            <person name="Lagrou M."/>
            <person name="Garber R.L."/>
            <person name="Goltry L."/>
            <person name="Tolentino E."/>
            <person name="Westbrock-Wadman S."/>
            <person name="Yuan Y."/>
            <person name="Brody L.L."/>
            <person name="Coulter S.N."/>
            <person name="Folger K.R."/>
            <person name="Kas A."/>
            <person name="Larbig K."/>
            <person name="Lim R.M."/>
            <person name="Smith K.A."/>
            <person name="Spencer D.H."/>
            <person name="Wong G.K.-S."/>
            <person name="Wu Z."/>
            <person name="Paulsen I.T."/>
            <person name="Reizer J."/>
            <person name="Saier M.H. Jr."/>
            <person name="Hancock R.E.W."/>
            <person name="Lory S."/>
            <person name="Olson M.V."/>
        </authorList>
    </citation>
    <scope>NUCLEOTIDE SEQUENCE [LARGE SCALE GENOMIC DNA]</scope>
    <source>
        <strain>ATCC 15692 / DSM 22644 / CIP 104116 / JCM 14847 / LMG 12228 / 1C / PRS 101 / PAO1</strain>
    </source>
</reference>
<comment type="function">
    <text evidence="1">IGPS catalyzes the conversion of PRFAR and glutamine to IGP, AICAR and glutamate. The HisF subunit catalyzes the cyclization activity that produces IGP and AICAR from PRFAR using the ammonia provided by the HisH subunit (By similarity).</text>
</comment>
<comment type="catalytic activity">
    <reaction>
        <text>5-[(5-phospho-1-deoxy-D-ribulos-1-ylimino)methylamino]-1-(5-phospho-beta-D-ribosyl)imidazole-4-carboxamide + L-glutamine = D-erythro-1-(imidazol-4-yl)glycerol 3-phosphate + 5-amino-1-(5-phospho-beta-D-ribosyl)imidazole-4-carboxamide + L-glutamate + H(+)</text>
        <dbReference type="Rhea" id="RHEA:24793"/>
        <dbReference type="ChEBI" id="CHEBI:15378"/>
        <dbReference type="ChEBI" id="CHEBI:29985"/>
        <dbReference type="ChEBI" id="CHEBI:58278"/>
        <dbReference type="ChEBI" id="CHEBI:58359"/>
        <dbReference type="ChEBI" id="CHEBI:58475"/>
        <dbReference type="ChEBI" id="CHEBI:58525"/>
        <dbReference type="EC" id="4.3.2.10"/>
    </reaction>
</comment>
<comment type="pathway">
    <text>Amino-acid biosynthesis; L-histidine biosynthesis; L-histidine from 5-phospho-alpha-D-ribose 1-diphosphate: step 5/9.</text>
</comment>
<comment type="subunit">
    <text evidence="1">Heterodimer of HisH and HisF.</text>
</comment>
<comment type="subcellular location">
    <subcellularLocation>
        <location evidence="1">Cytoplasm</location>
    </subcellularLocation>
</comment>
<comment type="similarity">
    <text evidence="3">Belongs to the HisA/HisF family.</text>
</comment>
<accession>Q9HU44</accession>
<sequence length="256" mass="27131">MALAKRIIPCLDVDNGRVVKGVKFENIRDAGDPVEIARRYDEQGADEITFLDITASVDGRDTTLHTVERMASQVFIPLTVGGGVRSVQDIRNLLNAGADKVSINTAAVFNPEFVGEAADRFGSQCIVVAIDAKKVSAPGEAPRWEIFTHGGRKPTGLDAVLWAKKMEDLGAGEILLTSMDQDGVKSGYDLGVTRAISEAVNVPVIASGGVGNLEHLAAGILEGKADAVLAASIFHFGEYTVPEAKAYLASRGIVVR</sequence>